<proteinExistence type="inferred from homology"/>
<sequence>MFDIGFSELLLVLVIGLVVLGPERLPVAVRTVSGWIRTLRSLAATVQNELAQELKLQELQDSLKKVEQAGLQNLTPELKASMDELKEAAEALKRSYHVDAGSEAPHTIHNPLVTEPEAIHDGVTPAEPATQVSALAQAPNILEAGTASVVDSVVEAAPVTTVKSVVQGEVLVKSTPVQEVGLADVMDKPVTKQQIDTIDSHGTDLSSAGPSRIHQPGGDQ</sequence>
<protein>
    <recommendedName>
        <fullName evidence="1">Sec-independent protein translocase protein TatB</fullName>
    </recommendedName>
</protein>
<name>TATB_YERPE</name>
<organism>
    <name type="scientific">Yersinia pestis</name>
    <dbReference type="NCBI Taxonomy" id="632"/>
    <lineage>
        <taxon>Bacteria</taxon>
        <taxon>Pseudomonadati</taxon>
        <taxon>Pseudomonadota</taxon>
        <taxon>Gammaproteobacteria</taxon>
        <taxon>Enterobacterales</taxon>
        <taxon>Yersiniaceae</taxon>
        <taxon>Yersinia</taxon>
    </lineage>
</organism>
<evidence type="ECO:0000255" key="1">
    <source>
        <dbReference type="HAMAP-Rule" id="MF_00237"/>
    </source>
</evidence>
<evidence type="ECO:0000256" key="2">
    <source>
        <dbReference type="SAM" id="MobiDB-lite"/>
    </source>
</evidence>
<comment type="function">
    <text evidence="1">Part of the twin-arginine translocation (Tat) system that transports large folded proteins containing a characteristic twin-arginine motif in their signal peptide across membranes. Together with TatC, TatB is part of a receptor directly interacting with Tat signal peptides. TatB may form an oligomeric binding site that transiently accommodates folded Tat precursor proteins before their translocation.</text>
</comment>
<comment type="subunit">
    <text evidence="1">The Tat system comprises two distinct complexes: a TatABC complex, containing multiple copies of TatA, TatB and TatC subunits, and a separate TatA complex, containing only TatA subunits. Substrates initially bind to the TatABC complex, which probably triggers association of the separate TatA complex to form the active translocon.</text>
</comment>
<comment type="subcellular location">
    <subcellularLocation>
        <location evidence="1">Cell inner membrane</location>
        <topology evidence="1">Single-pass membrane protein</topology>
    </subcellularLocation>
</comment>
<comment type="similarity">
    <text evidence="1">Belongs to the TatB family.</text>
</comment>
<accession>Q8ZAM3</accession>
<accession>Q0WAN4</accession>
<keyword id="KW-0997">Cell inner membrane</keyword>
<keyword id="KW-1003">Cell membrane</keyword>
<keyword id="KW-0472">Membrane</keyword>
<keyword id="KW-0653">Protein transport</keyword>
<keyword id="KW-1185">Reference proteome</keyword>
<keyword id="KW-0811">Translocation</keyword>
<keyword id="KW-0812">Transmembrane</keyword>
<keyword id="KW-1133">Transmembrane helix</keyword>
<keyword id="KW-0813">Transport</keyword>
<gene>
    <name evidence="1" type="primary">tatB</name>
    <name type="ordered locus">YPO3777</name>
    <name type="ordered locus">y0453</name>
    <name type="ordered locus">YP_3272</name>
</gene>
<reference key="1">
    <citation type="journal article" date="2001" name="Nature">
        <title>Genome sequence of Yersinia pestis, the causative agent of plague.</title>
        <authorList>
            <person name="Parkhill J."/>
            <person name="Wren B.W."/>
            <person name="Thomson N.R."/>
            <person name="Titball R.W."/>
            <person name="Holden M.T.G."/>
            <person name="Prentice M.B."/>
            <person name="Sebaihia M."/>
            <person name="James K.D."/>
            <person name="Churcher C.M."/>
            <person name="Mungall K.L."/>
            <person name="Baker S."/>
            <person name="Basham D."/>
            <person name="Bentley S.D."/>
            <person name="Brooks K."/>
            <person name="Cerdeno-Tarraga A.-M."/>
            <person name="Chillingworth T."/>
            <person name="Cronin A."/>
            <person name="Davies R.M."/>
            <person name="Davis P."/>
            <person name="Dougan G."/>
            <person name="Feltwell T."/>
            <person name="Hamlin N."/>
            <person name="Holroyd S."/>
            <person name="Jagels K."/>
            <person name="Karlyshev A.V."/>
            <person name="Leather S."/>
            <person name="Moule S."/>
            <person name="Oyston P.C.F."/>
            <person name="Quail M.A."/>
            <person name="Rutherford K.M."/>
            <person name="Simmonds M."/>
            <person name="Skelton J."/>
            <person name="Stevens K."/>
            <person name="Whitehead S."/>
            <person name="Barrell B.G."/>
        </authorList>
    </citation>
    <scope>NUCLEOTIDE SEQUENCE [LARGE SCALE GENOMIC DNA]</scope>
    <source>
        <strain>CO-92 / Biovar Orientalis</strain>
    </source>
</reference>
<reference key="2">
    <citation type="journal article" date="2002" name="J. Bacteriol.">
        <title>Genome sequence of Yersinia pestis KIM.</title>
        <authorList>
            <person name="Deng W."/>
            <person name="Burland V."/>
            <person name="Plunkett G. III"/>
            <person name="Boutin A."/>
            <person name="Mayhew G.F."/>
            <person name="Liss P."/>
            <person name="Perna N.T."/>
            <person name="Rose D.J."/>
            <person name="Mau B."/>
            <person name="Zhou S."/>
            <person name="Schwartz D.C."/>
            <person name="Fetherston J.D."/>
            <person name="Lindler L.E."/>
            <person name="Brubaker R.R."/>
            <person name="Plano G.V."/>
            <person name="Straley S.C."/>
            <person name="McDonough K.A."/>
            <person name="Nilles M.L."/>
            <person name="Matson J.S."/>
            <person name="Blattner F.R."/>
            <person name="Perry R.D."/>
        </authorList>
    </citation>
    <scope>NUCLEOTIDE SEQUENCE [LARGE SCALE GENOMIC DNA]</scope>
    <source>
        <strain>KIM10+ / Biovar Mediaevalis</strain>
    </source>
</reference>
<reference key="3">
    <citation type="journal article" date="2004" name="DNA Res.">
        <title>Complete genome sequence of Yersinia pestis strain 91001, an isolate avirulent to humans.</title>
        <authorList>
            <person name="Song Y."/>
            <person name="Tong Z."/>
            <person name="Wang J."/>
            <person name="Wang L."/>
            <person name="Guo Z."/>
            <person name="Han Y."/>
            <person name="Zhang J."/>
            <person name="Pei D."/>
            <person name="Zhou D."/>
            <person name="Qin H."/>
            <person name="Pang X."/>
            <person name="Han Y."/>
            <person name="Zhai J."/>
            <person name="Li M."/>
            <person name="Cui B."/>
            <person name="Qi Z."/>
            <person name="Jin L."/>
            <person name="Dai R."/>
            <person name="Chen F."/>
            <person name="Li S."/>
            <person name="Ye C."/>
            <person name="Du Z."/>
            <person name="Lin W."/>
            <person name="Wang J."/>
            <person name="Yu J."/>
            <person name="Yang H."/>
            <person name="Wang J."/>
            <person name="Huang P."/>
            <person name="Yang R."/>
        </authorList>
    </citation>
    <scope>NUCLEOTIDE SEQUENCE [LARGE SCALE GENOMIC DNA]</scope>
    <source>
        <strain>91001 / Biovar Mediaevalis</strain>
    </source>
</reference>
<dbReference type="EMBL" id="AL590842">
    <property type="protein sequence ID" value="CAL22363.1"/>
    <property type="molecule type" value="Genomic_DNA"/>
</dbReference>
<dbReference type="EMBL" id="AE009952">
    <property type="protein sequence ID" value="AAM84042.1"/>
    <property type="molecule type" value="Genomic_DNA"/>
</dbReference>
<dbReference type="EMBL" id="AE017042">
    <property type="protein sequence ID" value="AAS63440.1"/>
    <property type="molecule type" value="Genomic_DNA"/>
</dbReference>
<dbReference type="PIR" id="AH0459">
    <property type="entry name" value="AH0459"/>
</dbReference>
<dbReference type="RefSeq" id="WP_002211537.1">
    <property type="nucleotide sequence ID" value="NZ_WUCM01000048.1"/>
</dbReference>
<dbReference type="RefSeq" id="YP_002348654.1">
    <property type="nucleotide sequence ID" value="NC_003143.1"/>
</dbReference>
<dbReference type="SMR" id="Q8ZAM3"/>
<dbReference type="STRING" id="214092.YPO3777"/>
<dbReference type="PaxDb" id="214092-YPO3777"/>
<dbReference type="DNASU" id="1145400"/>
<dbReference type="EnsemblBacteria" id="AAS63440">
    <property type="protein sequence ID" value="AAS63440"/>
    <property type="gene ID" value="YP_3272"/>
</dbReference>
<dbReference type="GeneID" id="57974931"/>
<dbReference type="KEGG" id="ype:YPO3777"/>
<dbReference type="KEGG" id="ypk:y0453"/>
<dbReference type="KEGG" id="ypm:YP_3272"/>
<dbReference type="PATRIC" id="fig|214092.21.peg.4299"/>
<dbReference type="eggNOG" id="COG1826">
    <property type="taxonomic scope" value="Bacteria"/>
</dbReference>
<dbReference type="HOGENOM" id="CLU_086034_1_0_6"/>
<dbReference type="OMA" id="ADQPRTH"/>
<dbReference type="OrthoDB" id="9816005at2"/>
<dbReference type="Proteomes" id="UP000000815">
    <property type="component" value="Chromosome"/>
</dbReference>
<dbReference type="Proteomes" id="UP000001019">
    <property type="component" value="Chromosome"/>
</dbReference>
<dbReference type="Proteomes" id="UP000002490">
    <property type="component" value="Chromosome"/>
</dbReference>
<dbReference type="GO" id="GO:0033281">
    <property type="term" value="C:TAT protein transport complex"/>
    <property type="evidence" value="ECO:0007669"/>
    <property type="project" value="UniProtKB-UniRule"/>
</dbReference>
<dbReference type="GO" id="GO:0008320">
    <property type="term" value="F:protein transmembrane transporter activity"/>
    <property type="evidence" value="ECO:0007669"/>
    <property type="project" value="UniProtKB-UniRule"/>
</dbReference>
<dbReference type="GO" id="GO:0043953">
    <property type="term" value="P:protein transport by the Tat complex"/>
    <property type="evidence" value="ECO:0007669"/>
    <property type="project" value="UniProtKB-UniRule"/>
</dbReference>
<dbReference type="Gene3D" id="1.20.5.3310">
    <property type="match status" value="1"/>
</dbReference>
<dbReference type="HAMAP" id="MF_00237">
    <property type="entry name" value="TatB"/>
    <property type="match status" value="1"/>
</dbReference>
<dbReference type="InterPro" id="IPR018448">
    <property type="entry name" value="TatB"/>
</dbReference>
<dbReference type="NCBIfam" id="TIGR01410">
    <property type="entry name" value="tatB"/>
    <property type="match status" value="1"/>
</dbReference>
<dbReference type="PANTHER" id="PTHR33162">
    <property type="entry name" value="SEC-INDEPENDENT PROTEIN TRANSLOCASE PROTEIN TATA, CHLOROPLASTIC"/>
    <property type="match status" value="1"/>
</dbReference>
<dbReference type="PANTHER" id="PTHR33162:SF1">
    <property type="entry name" value="SEC-INDEPENDENT PROTEIN TRANSLOCASE PROTEIN TATA, CHLOROPLASTIC"/>
    <property type="match status" value="1"/>
</dbReference>
<dbReference type="PRINTS" id="PR01506">
    <property type="entry name" value="TATBPROTEIN"/>
</dbReference>
<feature type="chain" id="PRO_0000192681" description="Sec-independent protein translocase protein TatB">
    <location>
        <begin position="1"/>
        <end position="220"/>
    </location>
</feature>
<feature type="transmembrane region" description="Helical" evidence="1">
    <location>
        <begin position="1"/>
        <end position="21"/>
    </location>
</feature>
<feature type="region of interest" description="Disordered" evidence="2">
    <location>
        <begin position="192"/>
        <end position="220"/>
    </location>
</feature>